<feature type="chain" id="PRO_1000054167" description="Cyclic pyranopterin monophosphate synthase">
    <location>
        <begin position="1"/>
        <end position="159"/>
    </location>
</feature>
<feature type="active site" evidence="1">
    <location>
        <position position="128"/>
    </location>
</feature>
<feature type="binding site" evidence="1">
    <location>
        <begin position="75"/>
        <end position="77"/>
    </location>
    <ligand>
        <name>substrate</name>
    </ligand>
</feature>
<feature type="binding site" evidence="1">
    <location>
        <begin position="113"/>
        <end position="114"/>
    </location>
    <ligand>
        <name>substrate</name>
    </ligand>
</feature>
<comment type="function">
    <text evidence="1">Catalyzes the conversion of (8S)-3',8-cyclo-7,8-dihydroguanosine 5'-triphosphate to cyclic pyranopterin monophosphate (cPMP).</text>
</comment>
<comment type="catalytic activity">
    <reaction evidence="1">
        <text>(8S)-3',8-cyclo-7,8-dihydroguanosine 5'-triphosphate = cyclic pyranopterin phosphate + diphosphate</text>
        <dbReference type="Rhea" id="RHEA:49580"/>
        <dbReference type="ChEBI" id="CHEBI:33019"/>
        <dbReference type="ChEBI" id="CHEBI:59648"/>
        <dbReference type="ChEBI" id="CHEBI:131766"/>
        <dbReference type="EC" id="4.6.1.17"/>
    </reaction>
</comment>
<comment type="pathway">
    <text evidence="1">Cofactor biosynthesis; molybdopterin biosynthesis.</text>
</comment>
<comment type="subunit">
    <text evidence="1">Homohexamer; trimer of dimers.</text>
</comment>
<comment type="similarity">
    <text evidence="1">Belongs to the MoaC family.</text>
</comment>
<gene>
    <name evidence="1" type="primary">moaC</name>
    <name type="ordered locus">YPDSF_2537</name>
</gene>
<organism>
    <name type="scientific">Yersinia pestis (strain Pestoides F)</name>
    <dbReference type="NCBI Taxonomy" id="386656"/>
    <lineage>
        <taxon>Bacteria</taxon>
        <taxon>Pseudomonadati</taxon>
        <taxon>Pseudomonadota</taxon>
        <taxon>Gammaproteobacteria</taxon>
        <taxon>Enterobacterales</taxon>
        <taxon>Yersiniaceae</taxon>
        <taxon>Yersinia</taxon>
    </lineage>
</organism>
<name>MOAC_YERPP</name>
<accession>A4TNP7</accession>
<evidence type="ECO:0000255" key="1">
    <source>
        <dbReference type="HAMAP-Rule" id="MF_01224"/>
    </source>
</evidence>
<keyword id="KW-0456">Lyase</keyword>
<keyword id="KW-0501">Molybdenum cofactor biosynthesis</keyword>
<dbReference type="EC" id="4.6.1.17" evidence="1"/>
<dbReference type="EMBL" id="CP000668">
    <property type="protein sequence ID" value="ABP40909.1"/>
    <property type="molecule type" value="Genomic_DNA"/>
</dbReference>
<dbReference type="RefSeq" id="WP_002210772.1">
    <property type="nucleotide sequence ID" value="NZ_CP009715.1"/>
</dbReference>
<dbReference type="SMR" id="A4TNP7"/>
<dbReference type="GeneID" id="57977299"/>
<dbReference type="KEGG" id="ypp:YPDSF_2537"/>
<dbReference type="PATRIC" id="fig|386656.14.peg.4054"/>
<dbReference type="UniPathway" id="UPA00344"/>
<dbReference type="GO" id="GO:0061799">
    <property type="term" value="F:cyclic pyranopterin monophosphate synthase activity"/>
    <property type="evidence" value="ECO:0007669"/>
    <property type="project" value="UniProtKB-UniRule"/>
</dbReference>
<dbReference type="GO" id="GO:0006777">
    <property type="term" value="P:Mo-molybdopterin cofactor biosynthetic process"/>
    <property type="evidence" value="ECO:0007669"/>
    <property type="project" value="UniProtKB-UniRule"/>
</dbReference>
<dbReference type="CDD" id="cd01420">
    <property type="entry name" value="MoaC_PE"/>
    <property type="match status" value="1"/>
</dbReference>
<dbReference type="FunFam" id="3.30.70.640:FF:000001">
    <property type="entry name" value="Cyclic pyranopterin monophosphate synthase"/>
    <property type="match status" value="1"/>
</dbReference>
<dbReference type="Gene3D" id="3.30.70.640">
    <property type="entry name" value="Molybdopterin cofactor biosynthesis C (MoaC) domain"/>
    <property type="match status" value="1"/>
</dbReference>
<dbReference type="HAMAP" id="MF_01224_B">
    <property type="entry name" value="MoaC_B"/>
    <property type="match status" value="1"/>
</dbReference>
<dbReference type="InterPro" id="IPR023045">
    <property type="entry name" value="MoaC"/>
</dbReference>
<dbReference type="InterPro" id="IPR047594">
    <property type="entry name" value="MoaC_bact/euk"/>
</dbReference>
<dbReference type="InterPro" id="IPR036522">
    <property type="entry name" value="MoaC_sf"/>
</dbReference>
<dbReference type="InterPro" id="IPR050105">
    <property type="entry name" value="MoCo_biosynth_MoaA/MoaC"/>
</dbReference>
<dbReference type="InterPro" id="IPR002820">
    <property type="entry name" value="Mopterin_CF_biosynth-C_dom"/>
</dbReference>
<dbReference type="NCBIfam" id="TIGR00581">
    <property type="entry name" value="moaC"/>
    <property type="match status" value="1"/>
</dbReference>
<dbReference type="NCBIfam" id="NF006870">
    <property type="entry name" value="PRK09364.1"/>
    <property type="match status" value="1"/>
</dbReference>
<dbReference type="PANTHER" id="PTHR22960">
    <property type="entry name" value="MOLYBDOPTERIN COFACTOR SYNTHESIS PROTEIN A"/>
    <property type="match status" value="1"/>
</dbReference>
<dbReference type="Pfam" id="PF01967">
    <property type="entry name" value="MoaC"/>
    <property type="match status" value="1"/>
</dbReference>
<dbReference type="SUPFAM" id="SSF55040">
    <property type="entry name" value="Molybdenum cofactor biosynthesis protein C, MoaC"/>
    <property type="match status" value="1"/>
</dbReference>
<reference key="1">
    <citation type="submission" date="2007-02" db="EMBL/GenBank/DDBJ databases">
        <title>Complete sequence of chromosome of Yersinia pestis Pestoides F.</title>
        <authorList>
            <consortium name="US DOE Joint Genome Institute"/>
            <person name="Copeland A."/>
            <person name="Lucas S."/>
            <person name="Lapidus A."/>
            <person name="Barry K."/>
            <person name="Detter J.C."/>
            <person name="Glavina del Rio T."/>
            <person name="Hammon N."/>
            <person name="Israni S."/>
            <person name="Dalin E."/>
            <person name="Tice H."/>
            <person name="Pitluck S."/>
            <person name="Di Bartolo G."/>
            <person name="Chain P."/>
            <person name="Malfatti S."/>
            <person name="Shin M."/>
            <person name="Vergez L."/>
            <person name="Schmutz J."/>
            <person name="Larimer F."/>
            <person name="Land M."/>
            <person name="Hauser L."/>
            <person name="Worsham P."/>
            <person name="Chu M."/>
            <person name="Bearden S."/>
            <person name="Garcia E."/>
            <person name="Richardson P."/>
        </authorList>
    </citation>
    <scope>NUCLEOTIDE SEQUENCE [LARGE SCALE GENOMIC DNA]</scope>
    <source>
        <strain>Pestoides F</strain>
    </source>
</reference>
<protein>
    <recommendedName>
        <fullName evidence="1">Cyclic pyranopterin monophosphate synthase</fullName>
        <ecNumber evidence="1">4.6.1.17</ecNumber>
    </recommendedName>
    <alternativeName>
        <fullName evidence="1">Molybdenum cofactor biosynthesis protein C</fullName>
    </alternativeName>
</protein>
<proteinExistence type="inferred from homology"/>
<sequence>MTQLTHINTAGEAHMVDVSAKNETVREARAEAFVDMQAATLAMIIDGSHHKGDVFATARIAGIQAAKKTWELIPLCHPLLLTKVEVKLEAQPEHNRVRIETCCRLTGKTGVEMEALTAASVAALTIYDMCKAVQKDMIIGPVRLLTKSGGKSGDFKVDI</sequence>